<feature type="chain" id="PRO_0000082579" description="Ubiquitin-conjugating enzyme E2 11">
    <location>
        <begin position="1"/>
        <end position="148"/>
    </location>
</feature>
<feature type="domain" description="UBC core" evidence="1">
    <location>
        <begin position="1"/>
        <end position="147"/>
    </location>
</feature>
<feature type="active site" description="Glycyl thioester intermediate" evidence="1 2">
    <location>
        <position position="85"/>
    </location>
</feature>
<comment type="function">
    <text evidence="3">Accepts the ubiquitin from the E1 complex and catalyzes its covalent attachment to other proteins. Mediates the selective degradation of short-lived and abnormal proteins.</text>
</comment>
<comment type="catalytic activity">
    <reaction evidence="1 2">
        <text>S-ubiquitinyl-[E1 ubiquitin-activating enzyme]-L-cysteine + [E2 ubiquitin-conjugating enzyme]-L-cysteine = [E1 ubiquitin-activating enzyme]-L-cysteine + S-ubiquitinyl-[E2 ubiquitin-conjugating enzyme]-L-cysteine.</text>
        <dbReference type="EC" id="2.3.2.23"/>
    </reaction>
</comment>
<comment type="pathway">
    <text evidence="1">Protein modification; protein ubiquitination.</text>
</comment>
<comment type="subunit">
    <text evidence="4">Interacts with the E3 ubiquitin-protein ligases MBR1 and MBR2.</text>
</comment>
<comment type="tissue specificity">
    <text>Ubiquitously expressed. Mainly in petals.</text>
</comment>
<comment type="induction">
    <text evidence="3">Up-regulated by syringolin, a cell death-inducing chemical.</text>
</comment>
<comment type="similarity">
    <text evidence="1">Belongs to the ubiquitin-conjugating enzyme family.</text>
</comment>
<protein>
    <recommendedName>
        <fullName>Ubiquitin-conjugating enzyme E2 11</fullName>
        <ecNumber>2.3.2.23</ecNumber>
    </recommendedName>
    <alternativeName>
        <fullName>E2 ubiquitin-conjugating enzyme 11</fullName>
    </alternativeName>
    <alternativeName>
        <fullName>Ubiquitin carrier protein 11</fullName>
    </alternativeName>
    <alternativeName>
        <fullName>Ubiquitin-conjugating enzyme E2-17 kDa 11</fullName>
    </alternativeName>
    <alternativeName>
        <fullName>Ubiquitin-protein ligase 11</fullName>
    </alternativeName>
</protein>
<name>UBC11_ARATH</name>
<accession>P35134</accession>
<accession>Q4TYZ9</accession>
<accession>Q9M9J1</accession>
<sequence length="148" mass="16551">MASKRILKELKDLQKDPPSNCSAGPVAEDMFHWQATIMGPPESPYAGGVFLVSIHFPPDYPFKPPKVSFKTKVYHPNINSNGSICLDILKEQWSPALTISKVLLSICSLLTDPNPDDPLVPEIAHMYKTDRSKYESTARSWTQKYAMG</sequence>
<dbReference type="EC" id="2.3.2.23"/>
<dbReference type="EMBL" id="DQ027025">
    <property type="protein sequence ID" value="AAY44851.1"/>
    <property type="molecule type" value="mRNA"/>
</dbReference>
<dbReference type="EMBL" id="AC012562">
    <property type="protein sequence ID" value="AAG51362.1"/>
    <property type="molecule type" value="Genomic_DNA"/>
</dbReference>
<dbReference type="EMBL" id="CP002686">
    <property type="protein sequence ID" value="AEE74664.1"/>
    <property type="molecule type" value="Genomic_DNA"/>
</dbReference>
<dbReference type="EMBL" id="CP002686">
    <property type="protein sequence ID" value="AEE74665.1"/>
    <property type="molecule type" value="Genomic_DNA"/>
</dbReference>
<dbReference type="EMBL" id="AY063869">
    <property type="protein sequence ID" value="AAL36225.1"/>
    <property type="molecule type" value="mRNA"/>
</dbReference>
<dbReference type="EMBL" id="AY091223">
    <property type="protein sequence ID" value="AAM14162.1"/>
    <property type="molecule type" value="mRNA"/>
</dbReference>
<dbReference type="EMBL" id="AY086109">
    <property type="protein sequence ID" value="AAM63316.1"/>
    <property type="molecule type" value="mRNA"/>
</dbReference>
<dbReference type="EMBL" id="AK228254">
    <property type="protein sequence ID" value="BAF00202.1"/>
    <property type="molecule type" value="mRNA"/>
</dbReference>
<dbReference type="EMBL" id="Z14992">
    <property type="protein sequence ID" value="CAA78716.1"/>
    <property type="molecule type" value="mRNA"/>
</dbReference>
<dbReference type="EMBL" id="L00641">
    <property type="protein sequence ID" value="AAA32896.1"/>
    <property type="molecule type" value="mRNA"/>
</dbReference>
<dbReference type="PIR" id="S32673">
    <property type="entry name" value="S32673"/>
</dbReference>
<dbReference type="RefSeq" id="NP_001189841.1">
    <property type="nucleotide sequence ID" value="NM_001202912.1"/>
</dbReference>
<dbReference type="RefSeq" id="NP_566331.1">
    <property type="nucleotide sequence ID" value="NM_111703.4"/>
</dbReference>
<dbReference type="SMR" id="P35134"/>
<dbReference type="BioGRID" id="5351">
    <property type="interactions" value="7"/>
</dbReference>
<dbReference type="FunCoup" id="P35134">
    <property type="interactions" value="3771"/>
</dbReference>
<dbReference type="IntAct" id="P35134">
    <property type="interactions" value="3"/>
</dbReference>
<dbReference type="STRING" id="3702.P35134"/>
<dbReference type="PaxDb" id="3702-AT3G08690.2"/>
<dbReference type="EnsemblPlants" id="AT3G08690.1">
    <property type="protein sequence ID" value="AT3G08690.1"/>
    <property type="gene ID" value="AT3G08690"/>
</dbReference>
<dbReference type="EnsemblPlants" id="AT3G08690.2">
    <property type="protein sequence ID" value="AT3G08690.2"/>
    <property type="gene ID" value="AT3G08690"/>
</dbReference>
<dbReference type="GeneID" id="820016"/>
<dbReference type="Gramene" id="AT3G08690.1">
    <property type="protein sequence ID" value="AT3G08690.1"/>
    <property type="gene ID" value="AT3G08690"/>
</dbReference>
<dbReference type="Gramene" id="AT3G08690.2">
    <property type="protein sequence ID" value="AT3G08690.2"/>
    <property type="gene ID" value="AT3G08690"/>
</dbReference>
<dbReference type="KEGG" id="ath:AT3G08690"/>
<dbReference type="Araport" id="AT3G08690"/>
<dbReference type="TAIR" id="AT3G08690">
    <property type="gene designation" value="UBC11"/>
</dbReference>
<dbReference type="eggNOG" id="KOG0417">
    <property type="taxonomic scope" value="Eukaryota"/>
</dbReference>
<dbReference type="HOGENOM" id="CLU_030988_13_3_1"/>
<dbReference type="InParanoid" id="P35134"/>
<dbReference type="OMA" id="DIENTHR"/>
<dbReference type="OrthoDB" id="1021875at2759"/>
<dbReference type="PhylomeDB" id="P35134"/>
<dbReference type="UniPathway" id="UPA00143"/>
<dbReference type="PRO" id="PR:P35134"/>
<dbReference type="Proteomes" id="UP000006548">
    <property type="component" value="Chromosome 3"/>
</dbReference>
<dbReference type="ExpressionAtlas" id="P35134">
    <property type="expression patterns" value="baseline and differential"/>
</dbReference>
<dbReference type="GO" id="GO:0005524">
    <property type="term" value="F:ATP binding"/>
    <property type="evidence" value="ECO:0007669"/>
    <property type="project" value="UniProtKB-KW"/>
</dbReference>
<dbReference type="GO" id="GO:0061631">
    <property type="term" value="F:ubiquitin conjugating enzyme activity"/>
    <property type="evidence" value="ECO:0007669"/>
    <property type="project" value="UniProtKB-EC"/>
</dbReference>
<dbReference type="GO" id="GO:0004842">
    <property type="term" value="F:ubiquitin-protein transferase activity"/>
    <property type="evidence" value="ECO:0000314"/>
    <property type="project" value="TAIR"/>
</dbReference>
<dbReference type="GO" id="GO:0016567">
    <property type="term" value="P:protein ubiquitination"/>
    <property type="evidence" value="ECO:0007669"/>
    <property type="project" value="UniProtKB-UniPathway"/>
</dbReference>
<dbReference type="GO" id="GO:0006511">
    <property type="term" value="P:ubiquitin-dependent protein catabolic process"/>
    <property type="evidence" value="ECO:0000314"/>
    <property type="project" value="TAIR"/>
</dbReference>
<dbReference type="CDD" id="cd23792">
    <property type="entry name" value="UBCc_UBE2D"/>
    <property type="match status" value="1"/>
</dbReference>
<dbReference type="FunFam" id="3.10.110.10:FF:000001">
    <property type="entry name" value="Ubiquitin-conjugating enzyme 28, E2"/>
    <property type="match status" value="1"/>
</dbReference>
<dbReference type="Gene3D" id="3.10.110.10">
    <property type="entry name" value="Ubiquitin Conjugating Enzyme"/>
    <property type="match status" value="1"/>
</dbReference>
<dbReference type="InterPro" id="IPR000608">
    <property type="entry name" value="UBQ-conjugat_E2_core"/>
</dbReference>
<dbReference type="InterPro" id="IPR023313">
    <property type="entry name" value="UBQ-conjugating_AS"/>
</dbReference>
<dbReference type="InterPro" id="IPR016135">
    <property type="entry name" value="UBQ-conjugating_enzyme/RWD"/>
</dbReference>
<dbReference type="PANTHER" id="PTHR24068">
    <property type="entry name" value="UBIQUITIN-CONJUGATING ENZYME E2"/>
    <property type="match status" value="1"/>
</dbReference>
<dbReference type="Pfam" id="PF00179">
    <property type="entry name" value="UQ_con"/>
    <property type="match status" value="1"/>
</dbReference>
<dbReference type="SMART" id="SM00212">
    <property type="entry name" value="UBCc"/>
    <property type="match status" value="1"/>
</dbReference>
<dbReference type="SUPFAM" id="SSF54495">
    <property type="entry name" value="UBC-like"/>
    <property type="match status" value="1"/>
</dbReference>
<dbReference type="PROSITE" id="PS00183">
    <property type="entry name" value="UBC_1"/>
    <property type="match status" value="1"/>
</dbReference>
<dbReference type="PROSITE" id="PS50127">
    <property type="entry name" value="UBC_2"/>
    <property type="match status" value="1"/>
</dbReference>
<evidence type="ECO:0000255" key="1">
    <source>
        <dbReference type="PROSITE-ProRule" id="PRU00388"/>
    </source>
</evidence>
<evidence type="ECO:0000255" key="2">
    <source>
        <dbReference type="PROSITE-ProRule" id="PRU10133"/>
    </source>
</evidence>
<evidence type="ECO:0000269" key="3">
    <source>
    </source>
</evidence>
<evidence type="ECO:0000269" key="4">
    <source>
    </source>
</evidence>
<reference key="1">
    <citation type="journal article" date="2005" name="Plant Physiol.">
        <title>Genome analysis and functional characterization of the E2 and RING-type E3 ligase ubiquitination enzymes of Arabidopsis.</title>
        <authorList>
            <person name="Kraft E."/>
            <person name="Stone S.L."/>
            <person name="Ma L."/>
            <person name="Su N."/>
            <person name="Gao Y."/>
            <person name="Lau O.-S."/>
            <person name="Deng X.-W."/>
            <person name="Callis J."/>
        </authorList>
    </citation>
    <scope>NUCLEOTIDE SEQUENCE [MRNA]</scope>
    <scope>FUNCTION</scope>
    <scope>INDUCTION</scope>
    <scope>GENE FAMILY</scope>
    <scope>NOMENCLATURE</scope>
</reference>
<reference key="2">
    <citation type="journal article" date="2000" name="Nature">
        <title>Sequence and analysis of chromosome 3 of the plant Arabidopsis thaliana.</title>
        <authorList>
            <person name="Salanoubat M."/>
            <person name="Lemcke K."/>
            <person name="Rieger M."/>
            <person name="Ansorge W."/>
            <person name="Unseld M."/>
            <person name="Fartmann B."/>
            <person name="Valle G."/>
            <person name="Bloecker H."/>
            <person name="Perez-Alonso M."/>
            <person name="Obermaier B."/>
            <person name="Delseny M."/>
            <person name="Boutry M."/>
            <person name="Grivell L.A."/>
            <person name="Mache R."/>
            <person name="Puigdomenech P."/>
            <person name="De Simone V."/>
            <person name="Choisne N."/>
            <person name="Artiguenave F."/>
            <person name="Robert C."/>
            <person name="Brottier P."/>
            <person name="Wincker P."/>
            <person name="Cattolico L."/>
            <person name="Weissenbach J."/>
            <person name="Saurin W."/>
            <person name="Quetier F."/>
            <person name="Schaefer M."/>
            <person name="Mueller-Auer S."/>
            <person name="Gabel C."/>
            <person name="Fuchs M."/>
            <person name="Benes V."/>
            <person name="Wurmbach E."/>
            <person name="Drzonek H."/>
            <person name="Erfle H."/>
            <person name="Jordan N."/>
            <person name="Bangert S."/>
            <person name="Wiedelmann R."/>
            <person name="Kranz H."/>
            <person name="Voss H."/>
            <person name="Holland R."/>
            <person name="Brandt P."/>
            <person name="Nyakatura G."/>
            <person name="Vezzi A."/>
            <person name="D'Angelo M."/>
            <person name="Pallavicini A."/>
            <person name="Toppo S."/>
            <person name="Simionati B."/>
            <person name="Conrad A."/>
            <person name="Hornischer K."/>
            <person name="Kauer G."/>
            <person name="Loehnert T.-H."/>
            <person name="Nordsiek G."/>
            <person name="Reichelt J."/>
            <person name="Scharfe M."/>
            <person name="Schoen O."/>
            <person name="Bargues M."/>
            <person name="Terol J."/>
            <person name="Climent J."/>
            <person name="Navarro P."/>
            <person name="Collado C."/>
            <person name="Perez-Perez A."/>
            <person name="Ottenwaelder B."/>
            <person name="Duchemin D."/>
            <person name="Cooke R."/>
            <person name="Laudie M."/>
            <person name="Berger-Llauro C."/>
            <person name="Purnelle B."/>
            <person name="Masuy D."/>
            <person name="de Haan M."/>
            <person name="Maarse A.C."/>
            <person name="Alcaraz J.-P."/>
            <person name="Cottet A."/>
            <person name="Casacuberta E."/>
            <person name="Monfort A."/>
            <person name="Argiriou A."/>
            <person name="Flores M."/>
            <person name="Liguori R."/>
            <person name="Vitale D."/>
            <person name="Mannhaupt G."/>
            <person name="Haase D."/>
            <person name="Schoof H."/>
            <person name="Rudd S."/>
            <person name="Zaccaria P."/>
            <person name="Mewes H.-W."/>
            <person name="Mayer K.F.X."/>
            <person name="Kaul S."/>
            <person name="Town C.D."/>
            <person name="Koo H.L."/>
            <person name="Tallon L.J."/>
            <person name="Jenkins J."/>
            <person name="Rooney T."/>
            <person name="Rizzo M."/>
            <person name="Walts A."/>
            <person name="Utterback T."/>
            <person name="Fujii C.Y."/>
            <person name="Shea T.P."/>
            <person name="Creasy T.H."/>
            <person name="Haas B."/>
            <person name="Maiti R."/>
            <person name="Wu D."/>
            <person name="Peterson J."/>
            <person name="Van Aken S."/>
            <person name="Pai G."/>
            <person name="Militscher J."/>
            <person name="Sellers P."/>
            <person name="Gill J.E."/>
            <person name="Feldblyum T.V."/>
            <person name="Preuss D."/>
            <person name="Lin X."/>
            <person name="Nierman W.C."/>
            <person name="Salzberg S.L."/>
            <person name="White O."/>
            <person name="Venter J.C."/>
            <person name="Fraser C.M."/>
            <person name="Kaneko T."/>
            <person name="Nakamura Y."/>
            <person name="Sato S."/>
            <person name="Kato T."/>
            <person name="Asamizu E."/>
            <person name="Sasamoto S."/>
            <person name="Kimura T."/>
            <person name="Idesawa K."/>
            <person name="Kawashima K."/>
            <person name="Kishida Y."/>
            <person name="Kiyokawa C."/>
            <person name="Kohara M."/>
            <person name="Matsumoto M."/>
            <person name="Matsuno A."/>
            <person name="Muraki A."/>
            <person name="Nakayama S."/>
            <person name="Nakazaki N."/>
            <person name="Shinpo S."/>
            <person name="Takeuchi C."/>
            <person name="Wada T."/>
            <person name="Watanabe A."/>
            <person name="Yamada M."/>
            <person name="Yasuda M."/>
            <person name="Tabata S."/>
        </authorList>
    </citation>
    <scope>NUCLEOTIDE SEQUENCE [LARGE SCALE GENOMIC DNA]</scope>
    <source>
        <strain>cv. Columbia</strain>
    </source>
</reference>
<reference key="3">
    <citation type="journal article" date="2017" name="Plant J.">
        <title>Araport11: a complete reannotation of the Arabidopsis thaliana reference genome.</title>
        <authorList>
            <person name="Cheng C.Y."/>
            <person name="Krishnakumar V."/>
            <person name="Chan A.P."/>
            <person name="Thibaud-Nissen F."/>
            <person name="Schobel S."/>
            <person name="Town C.D."/>
        </authorList>
    </citation>
    <scope>GENOME REANNOTATION</scope>
    <source>
        <strain>cv. Columbia</strain>
    </source>
</reference>
<reference key="4">
    <citation type="journal article" date="2003" name="Science">
        <title>Empirical analysis of transcriptional activity in the Arabidopsis genome.</title>
        <authorList>
            <person name="Yamada K."/>
            <person name="Lim J."/>
            <person name="Dale J.M."/>
            <person name="Chen H."/>
            <person name="Shinn P."/>
            <person name="Palm C.J."/>
            <person name="Southwick A.M."/>
            <person name="Wu H.C."/>
            <person name="Kim C.J."/>
            <person name="Nguyen M."/>
            <person name="Pham P.K."/>
            <person name="Cheuk R.F."/>
            <person name="Karlin-Newmann G."/>
            <person name="Liu S.X."/>
            <person name="Lam B."/>
            <person name="Sakano H."/>
            <person name="Wu T."/>
            <person name="Yu G."/>
            <person name="Miranda M."/>
            <person name="Quach H.L."/>
            <person name="Tripp M."/>
            <person name="Chang C.H."/>
            <person name="Lee J.M."/>
            <person name="Toriumi M.J."/>
            <person name="Chan M.M."/>
            <person name="Tang C.C."/>
            <person name="Onodera C.S."/>
            <person name="Deng J.M."/>
            <person name="Akiyama K."/>
            <person name="Ansari Y."/>
            <person name="Arakawa T."/>
            <person name="Banh J."/>
            <person name="Banno F."/>
            <person name="Bowser L."/>
            <person name="Brooks S.Y."/>
            <person name="Carninci P."/>
            <person name="Chao Q."/>
            <person name="Choy N."/>
            <person name="Enju A."/>
            <person name="Goldsmith A.D."/>
            <person name="Gurjal M."/>
            <person name="Hansen N.F."/>
            <person name="Hayashizaki Y."/>
            <person name="Johnson-Hopson C."/>
            <person name="Hsuan V.W."/>
            <person name="Iida K."/>
            <person name="Karnes M."/>
            <person name="Khan S."/>
            <person name="Koesema E."/>
            <person name="Ishida J."/>
            <person name="Jiang P.X."/>
            <person name="Jones T."/>
            <person name="Kawai J."/>
            <person name="Kamiya A."/>
            <person name="Meyers C."/>
            <person name="Nakajima M."/>
            <person name="Narusaka M."/>
            <person name="Seki M."/>
            <person name="Sakurai T."/>
            <person name="Satou M."/>
            <person name="Tamse R."/>
            <person name="Vaysberg M."/>
            <person name="Wallender E.K."/>
            <person name="Wong C."/>
            <person name="Yamamura Y."/>
            <person name="Yuan S."/>
            <person name="Shinozaki K."/>
            <person name="Davis R.W."/>
            <person name="Theologis A."/>
            <person name="Ecker J.R."/>
        </authorList>
    </citation>
    <scope>NUCLEOTIDE SEQUENCE [LARGE SCALE MRNA]</scope>
    <source>
        <strain>cv. Columbia</strain>
    </source>
</reference>
<reference key="5">
    <citation type="submission" date="2002-03" db="EMBL/GenBank/DDBJ databases">
        <title>Full-length cDNA from Arabidopsis thaliana.</title>
        <authorList>
            <person name="Brover V.V."/>
            <person name="Troukhan M.E."/>
            <person name="Alexandrov N.A."/>
            <person name="Lu Y.-P."/>
            <person name="Flavell R.B."/>
            <person name="Feldmann K.A."/>
        </authorList>
    </citation>
    <scope>NUCLEOTIDE SEQUENCE [LARGE SCALE MRNA]</scope>
</reference>
<reference key="6">
    <citation type="submission" date="2006-07" db="EMBL/GenBank/DDBJ databases">
        <title>Large-scale analysis of RIKEN Arabidopsis full-length (RAFL) cDNAs.</title>
        <authorList>
            <person name="Totoki Y."/>
            <person name="Seki M."/>
            <person name="Ishida J."/>
            <person name="Nakajima M."/>
            <person name="Enju A."/>
            <person name="Kamiya A."/>
            <person name="Narusaka M."/>
            <person name="Shin-i T."/>
            <person name="Nakagawa M."/>
            <person name="Sakamoto N."/>
            <person name="Oishi K."/>
            <person name="Kohara Y."/>
            <person name="Kobayashi M."/>
            <person name="Toyoda A."/>
            <person name="Sakaki Y."/>
            <person name="Sakurai T."/>
            <person name="Iida K."/>
            <person name="Akiyama K."/>
            <person name="Satou M."/>
            <person name="Toyoda T."/>
            <person name="Konagaya A."/>
            <person name="Carninci P."/>
            <person name="Kawai J."/>
            <person name="Hayashizaki Y."/>
            <person name="Shinozaki K."/>
        </authorList>
    </citation>
    <scope>NUCLEOTIDE SEQUENCE [LARGE SCALE MRNA]</scope>
    <source>
        <strain>cv. Columbia</strain>
    </source>
</reference>
<reference key="7">
    <citation type="journal article" date="1993" name="Plant J.">
        <title>Homologs of the essential ubiquitin conjugating enzymes UBC1, 4, and 5 in yeast are encoded by a multigene family in Arabidopsis thaliana.</title>
        <authorList>
            <person name="Girod P.-A."/>
            <person name="Carpenter T.B."/>
            <person name="van Nocker S."/>
            <person name="Sullivan M.L."/>
            <person name="Vierstra R.D."/>
        </authorList>
    </citation>
    <scope>NUCLEOTIDE SEQUENCE [MRNA] OF 31-148</scope>
    <source>
        <strain>cv. Columbia</strain>
        <tissue>Leaf</tissue>
    </source>
</reference>
<reference key="8">
    <citation type="journal article" date="2012" name="Plant Physiol.">
        <title>Proteasome-mediated turnover of Arabidopsis MED25 is coupled to the activation of FLOWERING LOCUS T transcription.</title>
        <authorList>
            <person name="Inigo S."/>
            <person name="Giraldez A.N."/>
            <person name="Chory J."/>
            <person name="Cerdan P.D."/>
        </authorList>
    </citation>
    <scope>INTERACTION WITH MBR1 AND MBR2</scope>
</reference>
<proteinExistence type="evidence at protein level"/>
<keyword id="KW-0067">ATP-binding</keyword>
<keyword id="KW-0547">Nucleotide-binding</keyword>
<keyword id="KW-1185">Reference proteome</keyword>
<keyword id="KW-0808">Transferase</keyword>
<keyword id="KW-0833">Ubl conjugation pathway</keyword>
<organism>
    <name type="scientific">Arabidopsis thaliana</name>
    <name type="common">Mouse-ear cress</name>
    <dbReference type="NCBI Taxonomy" id="3702"/>
    <lineage>
        <taxon>Eukaryota</taxon>
        <taxon>Viridiplantae</taxon>
        <taxon>Streptophyta</taxon>
        <taxon>Embryophyta</taxon>
        <taxon>Tracheophyta</taxon>
        <taxon>Spermatophyta</taxon>
        <taxon>Magnoliopsida</taxon>
        <taxon>eudicotyledons</taxon>
        <taxon>Gunneridae</taxon>
        <taxon>Pentapetalae</taxon>
        <taxon>rosids</taxon>
        <taxon>malvids</taxon>
        <taxon>Brassicales</taxon>
        <taxon>Brassicaceae</taxon>
        <taxon>Camelineae</taxon>
        <taxon>Arabidopsis</taxon>
    </lineage>
</organism>
<gene>
    <name type="primary">UBC11</name>
    <name type="ordered locus">At3g08690</name>
    <name type="ORF">F17O14.16</name>
</gene>